<feature type="chain" id="PRO_1000013472" description="Large ribosomal subunit protein bL34">
    <location>
        <begin position="1"/>
        <end position="44"/>
    </location>
</feature>
<feature type="region of interest" description="Disordered" evidence="2">
    <location>
        <begin position="1"/>
        <end position="44"/>
    </location>
</feature>
<accession>A6QAL4</accession>
<gene>
    <name evidence="1" type="primary">rpmH</name>
    <name type="ordered locus">SUN_1573</name>
</gene>
<reference key="1">
    <citation type="journal article" date="2007" name="Proc. Natl. Acad. Sci. U.S.A.">
        <title>Deep-sea vent epsilon-proteobacterial genomes provide insights into emergence of pathogens.</title>
        <authorList>
            <person name="Nakagawa S."/>
            <person name="Takaki Y."/>
            <person name="Shimamura S."/>
            <person name="Reysenbach A.-L."/>
            <person name="Takai K."/>
            <person name="Horikoshi K."/>
        </authorList>
    </citation>
    <scope>NUCLEOTIDE SEQUENCE [LARGE SCALE GENOMIC DNA]</scope>
    <source>
        <strain>NBC37-1</strain>
    </source>
</reference>
<dbReference type="EMBL" id="AP009179">
    <property type="protein sequence ID" value="BAF72523.1"/>
    <property type="molecule type" value="Genomic_DNA"/>
</dbReference>
<dbReference type="RefSeq" id="WP_012083326.1">
    <property type="nucleotide sequence ID" value="NC_009663.1"/>
</dbReference>
<dbReference type="SMR" id="A6QAL4"/>
<dbReference type="STRING" id="387093.SUN_1573"/>
<dbReference type="KEGG" id="sun:SUN_1573"/>
<dbReference type="eggNOG" id="COG0230">
    <property type="taxonomic scope" value="Bacteria"/>
</dbReference>
<dbReference type="HOGENOM" id="CLU_129938_2_0_7"/>
<dbReference type="OrthoDB" id="9804164at2"/>
<dbReference type="Proteomes" id="UP000006378">
    <property type="component" value="Chromosome"/>
</dbReference>
<dbReference type="GO" id="GO:1990904">
    <property type="term" value="C:ribonucleoprotein complex"/>
    <property type="evidence" value="ECO:0007669"/>
    <property type="project" value="UniProtKB-KW"/>
</dbReference>
<dbReference type="GO" id="GO:0005840">
    <property type="term" value="C:ribosome"/>
    <property type="evidence" value="ECO:0007669"/>
    <property type="project" value="UniProtKB-KW"/>
</dbReference>
<dbReference type="GO" id="GO:0003735">
    <property type="term" value="F:structural constituent of ribosome"/>
    <property type="evidence" value="ECO:0007669"/>
    <property type="project" value="InterPro"/>
</dbReference>
<dbReference type="GO" id="GO:0006412">
    <property type="term" value="P:translation"/>
    <property type="evidence" value="ECO:0007669"/>
    <property type="project" value="UniProtKB-UniRule"/>
</dbReference>
<dbReference type="FunFam" id="1.10.287.3980:FF:000001">
    <property type="entry name" value="Mitochondrial ribosomal protein L34"/>
    <property type="match status" value="1"/>
</dbReference>
<dbReference type="Gene3D" id="1.10.287.3980">
    <property type="match status" value="1"/>
</dbReference>
<dbReference type="HAMAP" id="MF_00391">
    <property type="entry name" value="Ribosomal_bL34"/>
    <property type="match status" value="1"/>
</dbReference>
<dbReference type="InterPro" id="IPR000271">
    <property type="entry name" value="Ribosomal_bL34"/>
</dbReference>
<dbReference type="InterPro" id="IPR020939">
    <property type="entry name" value="Ribosomal_bL34_CS"/>
</dbReference>
<dbReference type="NCBIfam" id="TIGR01030">
    <property type="entry name" value="rpmH_bact"/>
    <property type="match status" value="1"/>
</dbReference>
<dbReference type="PANTHER" id="PTHR14503:SF4">
    <property type="entry name" value="LARGE RIBOSOMAL SUBUNIT PROTEIN BL34M"/>
    <property type="match status" value="1"/>
</dbReference>
<dbReference type="PANTHER" id="PTHR14503">
    <property type="entry name" value="MITOCHONDRIAL RIBOSOMAL PROTEIN 34 FAMILY MEMBER"/>
    <property type="match status" value="1"/>
</dbReference>
<dbReference type="Pfam" id="PF00468">
    <property type="entry name" value="Ribosomal_L34"/>
    <property type="match status" value="1"/>
</dbReference>
<dbReference type="PROSITE" id="PS00784">
    <property type="entry name" value="RIBOSOMAL_L34"/>
    <property type="match status" value="1"/>
</dbReference>
<evidence type="ECO:0000255" key="1">
    <source>
        <dbReference type="HAMAP-Rule" id="MF_00391"/>
    </source>
</evidence>
<evidence type="ECO:0000256" key="2">
    <source>
        <dbReference type="SAM" id="MobiDB-lite"/>
    </source>
</evidence>
<evidence type="ECO:0000305" key="3"/>
<comment type="similarity">
    <text evidence="1">Belongs to the bacterial ribosomal protein bL34 family.</text>
</comment>
<protein>
    <recommendedName>
        <fullName evidence="1">Large ribosomal subunit protein bL34</fullName>
    </recommendedName>
    <alternativeName>
        <fullName evidence="3">50S ribosomal protein L34</fullName>
    </alternativeName>
</protein>
<sequence length="44" mass="5292">MKRTYQPHNTPRKRTHGFRTRMKTKNGRKVISARRAKGRKRLSV</sequence>
<proteinExistence type="inferred from homology"/>
<keyword id="KW-0687">Ribonucleoprotein</keyword>
<keyword id="KW-0689">Ribosomal protein</keyword>
<organism>
    <name type="scientific">Sulfurovum sp. (strain NBC37-1)</name>
    <dbReference type="NCBI Taxonomy" id="387093"/>
    <lineage>
        <taxon>Bacteria</taxon>
        <taxon>Pseudomonadati</taxon>
        <taxon>Campylobacterota</taxon>
        <taxon>Epsilonproteobacteria</taxon>
        <taxon>Campylobacterales</taxon>
        <taxon>Sulfurovaceae</taxon>
        <taxon>Sulfurovum</taxon>
    </lineage>
</organism>
<name>RL34_SULNB</name>